<accession>A4XI79</accession>
<name>APT_CALS8</name>
<feature type="chain" id="PRO_1000000265" description="Adenine phosphoribosyltransferase">
    <location>
        <begin position="1"/>
        <end position="175"/>
    </location>
</feature>
<protein>
    <recommendedName>
        <fullName evidence="1">Adenine phosphoribosyltransferase</fullName>
        <shortName evidence="1">APRT</shortName>
        <ecNumber evidence="1">2.4.2.7</ecNumber>
    </recommendedName>
</protein>
<organism>
    <name type="scientific">Caldicellulosiruptor saccharolyticus (strain ATCC 43494 / DSM 8903 / Tp8T 6331)</name>
    <dbReference type="NCBI Taxonomy" id="351627"/>
    <lineage>
        <taxon>Bacteria</taxon>
        <taxon>Bacillati</taxon>
        <taxon>Bacillota</taxon>
        <taxon>Bacillota incertae sedis</taxon>
        <taxon>Caldicellulosiruptorales</taxon>
        <taxon>Caldicellulosiruptoraceae</taxon>
        <taxon>Caldicellulosiruptor</taxon>
    </lineage>
</organism>
<gene>
    <name evidence="1" type="primary">apt</name>
    <name type="ordered locus">Csac_1000</name>
</gene>
<proteinExistence type="inferred from homology"/>
<keyword id="KW-0963">Cytoplasm</keyword>
<keyword id="KW-0328">Glycosyltransferase</keyword>
<keyword id="KW-0660">Purine salvage</keyword>
<keyword id="KW-0808">Transferase</keyword>
<reference key="1">
    <citation type="submission" date="2007-04" db="EMBL/GenBank/DDBJ databases">
        <title>Genome sequence of the thermophilic hydrogen-producing bacterium Caldicellulosiruptor saccharolyticus DSM 8903.</title>
        <authorList>
            <person name="Copeland A."/>
            <person name="Lucas S."/>
            <person name="Lapidus A."/>
            <person name="Barry K."/>
            <person name="Detter J.C."/>
            <person name="Glavina del Rio T."/>
            <person name="Hammon N."/>
            <person name="Israni S."/>
            <person name="Dalin E."/>
            <person name="Tice H."/>
            <person name="Pitluck S."/>
            <person name="Kiss H."/>
            <person name="Brettin T."/>
            <person name="Bruce D."/>
            <person name="Han C."/>
            <person name="Schmutz J."/>
            <person name="Larimer F."/>
            <person name="Land M."/>
            <person name="Hauser L."/>
            <person name="Kyrpides N."/>
            <person name="Lykidis A."/>
            <person name="van de Werken H.J.G."/>
            <person name="Verhaart M.R.A."/>
            <person name="VanFossen A.L."/>
            <person name="Lewis D.L."/>
            <person name="Nichols J.D."/>
            <person name="Goorissen H.P."/>
            <person name="van Niel E.W.J."/>
            <person name="Stams F.J.M."/>
            <person name="Willquist K.U."/>
            <person name="Ward D.E."/>
            <person name="van der Oost J."/>
            <person name="Kelly R.M."/>
            <person name="Kengen S.M.W."/>
            <person name="Richardson P."/>
        </authorList>
    </citation>
    <scope>NUCLEOTIDE SEQUENCE [LARGE SCALE GENOMIC DNA]</scope>
    <source>
        <strain>ATCC 43494 / DSM 8903 / Tp8T 6331</strain>
    </source>
</reference>
<evidence type="ECO:0000255" key="1">
    <source>
        <dbReference type="HAMAP-Rule" id="MF_00004"/>
    </source>
</evidence>
<comment type="function">
    <text evidence="1">Catalyzes a salvage reaction resulting in the formation of AMP, that is energically less costly than de novo synthesis.</text>
</comment>
<comment type="catalytic activity">
    <reaction evidence="1">
        <text>AMP + diphosphate = 5-phospho-alpha-D-ribose 1-diphosphate + adenine</text>
        <dbReference type="Rhea" id="RHEA:16609"/>
        <dbReference type="ChEBI" id="CHEBI:16708"/>
        <dbReference type="ChEBI" id="CHEBI:33019"/>
        <dbReference type="ChEBI" id="CHEBI:58017"/>
        <dbReference type="ChEBI" id="CHEBI:456215"/>
        <dbReference type="EC" id="2.4.2.7"/>
    </reaction>
</comment>
<comment type="pathway">
    <text evidence="1">Purine metabolism; AMP biosynthesis via salvage pathway; AMP from adenine: step 1/1.</text>
</comment>
<comment type="subunit">
    <text evidence="1">Homodimer.</text>
</comment>
<comment type="subcellular location">
    <subcellularLocation>
        <location evidence="1">Cytoplasm</location>
    </subcellularLocation>
</comment>
<comment type="similarity">
    <text evidence="1">Belongs to the purine/pyrimidine phosphoribosyltransferase family.</text>
</comment>
<dbReference type="EC" id="2.4.2.7" evidence="1"/>
<dbReference type="EMBL" id="CP000679">
    <property type="protein sequence ID" value="ABP66614.1"/>
    <property type="molecule type" value="Genomic_DNA"/>
</dbReference>
<dbReference type="RefSeq" id="WP_011916560.1">
    <property type="nucleotide sequence ID" value="NC_009437.1"/>
</dbReference>
<dbReference type="SMR" id="A4XI79"/>
<dbReference type="STRING" id="351627.Csac_1000"/>
<dbReference type="KEGG" id="csc:Csac_1000"/>
<dbReference type="eggNOG" id="COG0503">
    <property type="taxonomic scope" value="Bacteria"/>
</dbReference>
<dbReference type="HOGENOM" id="CLU_063339_3_0_9"/>
<dbReference type="OrthoDB" id="9803963at2"/>
<dbReference type="UniPathway" id="UPA00588">
    <property type="reaction ID" value="UER00646"/>
</dbReference>
<dbReference type="Proteomes" id="UP000000256">
    <property type="component" value="Chromosome"/>
</dbReference>
<dbReference type="GO" id="GO:0005737">
    <property type="term" value="C:cytoplasm"/>
    <property type="evidence" value="ECO:0007669"/>
    <property type="project" value="UniProtKB-SubCell"/>
</dbReference>
<dbReference type="GO" id="GO:0002055">
    <property type="term" value="F:adenine binding"/>
    <property type="evidence" value="ECO:0007669"/>
    <property type="project" value="TreeGrafter"/>
</dbReference>
<dbReference type="GO" id="GO:0003999">
    <property type="term" value="F:adenine phosphoribosyltransferase activity"/>
    <property type="evidence" value="ECO:0007669"/>
    <property type="project" value="UniProtKB-UniRule"/>
</dbReference>
<dbReference type="GO" id="GO:0016208">
    <property type="term" value="F:AMP binding"/>
    <property type="evidence" value="ECO:0007669"/>
    <property type="project" value="TreeGrafter"/>
</dbReference>
<dbReference type="GO" id="GO:0006168">
    <property type="term" value="P:adenine salvage"/>
    <property type="evidence" value="ECO:0007669"/>
    <property type="project" value="InterPro"/>
</dbReference>
<dbReference type="GO" id="GO:0044209">
    <property type="term" value="P:AMP salvage"/>
    <property type="evidence" value="ECO:0007669"/>
    <property type="project" value="UniProtKB-UniRule"/>
</dbReference>
<dbReference type="GO" id="GO:0006166">
    <property type="term" value="P:purine ribonucleoside salvage"/>
    <property type="evidence" value="ECO:0007669"/>
    <property type="project" value="UniProtKB-KW"/>
</dbReference>
<dbReference type="CDD" id="cd06223">
    <property type="entry name" value="PRTases_typeI"/>
    <property type="match status" value="1"/>
</dbReference>
<dbReference type="FunFam" id="3.40.50.2020:FF:000004">
    <property type="entry name" value="Adenine phosphoribosyltransferase"/>
    <property type="match status" value="1"/>
</dbReference>
<dbReference type="Gene3D" id="3.40.50.2020">
    <property type="match status" value="1"/>
</dbReference>
<dbReference type="HAMAP" id="MF_00004">
    <property type="entry name" value="Aden_phosphoribosyltr"/>
    <property type="match status" value="1"/>
</dbReference>
<dbReference type="InterPro" id="IPR005764">
    <property type="entry name" value="Ade_phspho_trans"/>
</dbReference>
<dbReference type="InterPro" id="IPR000836">
    <property type="entry name" value="PRibTrfase_dom"/>
</dbReference>
<dbReference type="InterPro" id="IPR029057">
    <property type="entry name" value="PRTase-like"/>
</dbReference>
<dbReference type="InterPro" id="IPR050054">
    <property type="entry name" value="UPRTase/APRTase"/>
</dbReference>
<dbReference type="NCBIfam" id="TIGR01090">
    <property type="entry name" value="apt"/>
    <property type="match status" value="1"/>
</dbReference>
<dbReference type="NCBIfam" id="NF002633">
    <property type="entry name" value="PRK02304.1-2"/>
    <property type="match status" value="1"/>
</dbReference>
<dbReference type="NCBIfam" id="NF002634">
    <property type="entry name" value="PRK02304.1-3"/>
    <property type="match status" value="1"/>
</dbReference>
<dbReference type="NCBIfam" id="NF002636">
    <property type="entry name" value="PRK02304.1-5"/>
    <property type="match status" value="1"/>
</dbReference>
<dbReference type="PANTHER" id="PTHR32315">
    <property type="entry name" value="ADENINE PHOSPHORIBOSYLTRANSFERASE"/>
    <property type="match status" value="1"/>
</dbReference>
<dbReference type="PANTHER" id="PTHR32315:SF3">
    <property type="entry name" value="ADENINE PHOSPHORIBOSYLTRANSFERASE"/>
    <property type="match status" value="1"/>
</dbReference>
<dbReference type="Pfam" id="PF00156">
    <property type="entry name" value="Pribosyltran"/>
    <property type="match status" value="1"/>
</dbReference>
<dbReference type="SUPFAM" id="SSF53271">
    <property type="entry name" value="PRTase-like"/>
    <property type="match status" value="1"/>
</dbReference>
<dbReference type="PROSITE" id="PS00103">
    <property type="entry name" value="PUR_PYR_PR_TRANSFER"/>
    <property type="match status" value="1"/>
</dbReference>
<sequence>MNLKEKFRHVLNFPKEGIDFIDITTVLQDKDAFKYAIDSLVNLVKDLDFDLIVGPESRGFIFGAPVAYVLNKGLVLVRKKGKLPYKTVSVEYELEYGKDILEMHIDAIQPGQKVVIIDDLLATGGTTLSNIKLVEKLGGKVVGIAYLVELTYLNGRENLKGYDVRSVVQFESSLI</sequence>